<keyword id="KW-0963">Cytoplasm</keyword>
<keyword id="KW-0275">Fatty acid biosynthesis</keyword>
<keyword id="KW-0276">Fatty acid metabolism</keyword>
<keyword id="KW-0444">Lipid biosynthesis</keyword>
<keyword id="KW-0443">Lipid metabolism</keyword>
<keyword id="KW-0460">Magnesium</keyword>
<keyword id="KW-0479">Metal-binding</keyword>
<keyword id="KW-0808">Transferase</keyword>
<protein>
    <recommendedName>
        <fullName evidence="1">Holo-[acyl-carrier-protein] synthase</fullName>
        <shortName evidence="1">Holo-ACP synthase</shortName>
        <ecNumber evidence="1">2.7.8.7</ecNumber>
    </recommendedName>
    <alternativeName>
        <fullName evidence="1">4'-phosphopantetheinyl transferase AcpS</fullName>
    </alternativeName>
</protein>
<proteinExistence type="inferred from homology"/>
<comment type="function">
    <text evidence="1">Transfers the 4'-phosphopantetheine moiety from coenzyme A to a Ser of acyl-carrier-protein.</text>
</comment>
<comment type="catalytic activity">
    <reaction evidence="1">
        <text>apo-[ACP] + CoA = holo-[ACP] + adenosine 3',5'-bisphosphate + H(+)</text>
        <dbReference type="Rhea" id="RHEA:12068"/>
        <dbReference type="Rhea" id="RHEA-COMP:9685"/>
        <dbReference type="Rhea" id="RHEA-COMP:9690"/>
        <dbReference type="ChEBI" id="CHEBI:15378"/>
        <dbReference type="ChEBI" id="CHEBI:29999"/>
        <dbReference type="ChEBI" id="CHEBI:57287"/>
        <dbReference type="ChEBI" id="CHEBI:58343"/>
        <dbReference type="ChEBI" id="CHEBI:64479"/>
        <dbReference type="EC" id="2.7.8.7"/>
    </reaction>
</comment>
<comment type="cofactor">
    <cofactor evidence="1">
        <name>Mg(2+)</name>
        <dbReference type="ChEBI" id="CHEBI:18420"/>
    </cofactor>
</comment>
<comment type="subcellular location">
    <subcellularLocation>
        <location evidence="1">Cytoplasm</location>
    </subcellularLocation>
</comment>
<comment type="similarity">
    <text evidence="1">Belongs to the P-Pant transferase superfamily. AcpS family.</text>
</comment>
<evidence type="ECO:0000255" key="1">
    <source>
        <dbReference type="HAMAP-Rule" id="MF_00101"/>
    </source>
</evidence>
<reference key="1">
    <citation type="journal article" date="2009" name="J. Bacteriol.">
        <title>Complete genome sequence of Rhodobacter sphaeroides KD131.</title>
        <authorList>
            <person name="Lim S.-K."/>
            <person name="Kim S.J."/>
            <person name="Cha S.H."/>
            <person name="Oh Y.-K."/>
            <person name="Rhee H.-J."/>
            <person name="Kim M.-S."/>
            <person name="Lee J.K."/>
        </authorList>
    </citation>
    <scope>NUCLEOTIDE SEQUENCE [LARGE SCALE GENOMIC DNA]</scope>
    <source>
        <strain>KD131 / KCTC 12085</strain>
    </source>
</reference>
<feature type="chain" id="PRO_1000118822" description="Holo-[acyl-carrier-protein] synthase">
    <location>
        <begin position="1"/>
        <end position="137"/>
    </location>
</feature>
<feature type="binding site" evidence="1">
    <location>
        <position position="8"/>
    </location>
    <ligand>
        <name>Mg(2+)</name>
        <dbReference type="ChEBI" id="CHEBI:18420"/>
    </ligand>
</feature>
<feature type="binding site" evidence="1">
    <location>
        <position position="57"/>
    </location>
    <ligand>
        <name>Mg(2+)</name>
        <dbReference type="ChEBI" id="CHEBI:18420"/>
    </ligand>
</feature>
<gene>
    <name evidence="1" type="primary">acpS</name>
    <name type="ordered locus">RSKD131_3073</name>
</gene>
<organism>
    <name type="scientific">Cereibacter sphaeroides (strain KD131 / KCTC 12085)</name>
    <name type="common">Rhodobacter sphaeroides</name>
    <dbReference type="NCBI Taxonomy" id="557760"/>
    <lineage>
        <taxon>Bacteria</taxon>
        <taxon>Pseudomonadati</taxon>
        <taxon>Pseudomonadota</taxon>
        <taxon>Alphaproteobacteria</taxon>
        <taxon>Rhodobacterales</taxon>
        <taxon>Paracoccaceae</taxon>
        <taxon>Cereibacter</taxon>
    </lineage>
</organism>
<accession>B9KSA5</accession>
<name>ACPS_CERSK</name>
<sequence>MILGIGTDLANIDRMEKTLARFGERFRNRVFTPLEQAKAERRADVAGTYAKRWAAKEACSKALGTGLRMGISWKDMSVANLETGQPVMRLTGWAAERLASMTPPGHEAVVHVSLTDDHPWAQAFVVIEARPRAAPPA</sequence>
<dbReference type="EC" id="2.7.8.7" evidence="1"/>
<dbReference type="EMBL" id="CP001150">
    <property type="protein sequence ID" value="ACM02933.1"/>
    <property type="molecule type" value="Genomic_DNA"/>
</dbReference>
<dbReference type="RefSeq" id="WP_002722416.1">
    <property type="nucleotide sequence ID" value="NC_011963.1"/>
</dbReference>
<dbReference type="SMR" id="B9KSA5"/>
<dbReference type="GeneID" id="67448433"/>
<dbReference type="KEGG" id="rsk:RSKD131_3073"/>
<dbReference type="HOGENOM" id="CLU_089696_0_2_5"/>
<dbReference type="GO" id="GO:0005737">
    <property type="term" value="C:cytoplasm"/>
    <property type="evidence" value="ECO:0007669"/>
    <property type="project" value="UniProtKB-SubCell"/>
</dbReference>
<dbReference type="GO" id="GO:0008897">
    <property type="term" value="F:holo-[acyl-carrier-protein] synthase activity"/>
    <property type="evidence" value="ECO:0007669"/>
    <property type="project" value="UniProtKB-UniRule"/>
</dbReference>
<dbReference type="GO" id="GO:0000287">
    <property type="term" value="F:magnesium ion binding"/>
    <property type="evidence" value="ECO:0007669"/>
    <property type="project" value="UniProtKB-UniRule"/>
</dbReference>
<dbReference type="GO" id="GO:0006633">
    <property type="term" value="P:fatty acid biosynthetic process"/>
    <property type="evidence" value="ECO:0007669"/>
    <property type="project" value="UniProtKB-UniRule"/>
</dbReference>
<dbReference type="Gene3D" id="3.90.470.20">
    <property type="entry name" value="4'-phosphopantetheinyl transferase domain"/>
    <property type="match status" value="1"/>
</dbReference>
<dbReference type="HAMAP" id="MF_00101">
    <property type="entry name" value="AcpS"/>
    <property type="match status" value="1"/>
</dbReference>
<dbReference type="InterPro" id="IPR008278">
    <property type="entry name" value="4-PPantetheinyl_Trfase_dom"/>
</dbReference>
<dbReference type="InterPro" id="IPR037143">
    <property type="entry name" value="4-PPantetheinyl_Trfase_dom_sf"/>
</dbReference>
<dbReference type="InterPro" id="IPR002582">
    <property type="entry name" value="ACPS"/>
</dbReference>
<dbReference type="InterPro" id="IPR004568">
    <property type="entry name" value="Ppantetheine-prot_Trfase_dom"/>
</dbReference>
<dbReference type="NCBIfam" id="TIGR00516">
    <property type="entry name" value="acpS"/>
    <property type="match status" value="1"/>
</dbReference>
<dbReference type="NCBIfam" id="TIGR00556">
    <property type="entry name" value="pantethn_trn"/>
    <property type="match status" value="1"/>
</dbReference>
<dbReference type="Pfam" id="PF01648">
    <property type="entry name" value="ACPS"/>
    <property type="match status" value="1"/>
</dbReference>
<dbReference type="SUPFAM" id="SSF56214">
    <property type="entry name" value="4'-phosphopantetheinyl transferase"/>
    <property type="match status" value="1"/>
</dbReference>